<dbReference type="EMBL" id="FM954972">
    <property type="protein sequence ID" value="CAV19021.1"/>
    <property type="molecule type" value="Genomic_DNA"/>
</dbReference>
<dbReference type="SMR" id="B7VPS1"/>
<dbReference type="STRING" id="575788.VS_1837"/>
<dbReference type="KEGG" id="vsp:VS_1837"/>
<dbReference type="eggNOG" id="COG2985">
    <property type="taxonomic scope" value="Bacteria"/>
</dbReference>
<dbReference type="eggNOG" id="COG3273">
    <property type="taxonomic scope" value="Bacteria"/>
</dbReference>
<dbReference type="HOGENOM" id="CLU_035023_2_2_6"/>
<dbReference type="Proteomes" id="UP000009100">
    <property type="component" value="Chromosome 1"/>
</dbReference>
<dbReference type="GO" id="GO:0005886">
    <property type="term" value="C:plasma membrane"/>
    <property type="evidence" value="ECO:0007669"/>
    <property type="project" value="UniProtKB-SubCell"/>
</dbReference>
<dbReference type="GO" id="GO:0008324">
    <property type="term" value="F:monoatomic cation transmembrane transporter activity"/>
    <property type="evidence" value="ECO:0007669"/>
    <property type="project" value="InterPro"/>
</dbReference>
<dbReference type="GO" id="GO:0006813">
    <property type="term" value="P:potassium ion transport"/>
    <property type="evidence" value="ECO:0007669"/>
    <property type="project" value="InterPro"/>
</dbReference>
<dbReference type="Gene3D" id="3.30.70.1450">
    <property type="entry name" value="Regulator of K+ conductance, C-terminal domain"/>
    <property type="match status" value="1"/>
</dbReference>
<dbReference type="HAMAP" id="MF_01015">
    <property type="entry name" value="YbjL"/>
    <property type="match status" value="1"/>
</dbReference>
<dbReference type="InterPro" id="IPR050144">
    <property type="entry name" value="AAE_transporter"/>
</dbReference>
<dbReference type="InterPro" id="IPR006037">
    <property type="entry name" value="RCK_C"/>
</dbReference>
<dbReference type="InterPro" id="IPR036721">
    <property type="entry name" value="RCK_C_sf"/>
</dbReference>
<dbReference type="InterPro" id="IPR023017">
    <property type="entry name" value="Transp_YbjL_put"/>
</dbReference>
<dbReference type="InterPro" id="IPR006512">
    <property type="entry name" value="YidE_YbjL"/>
</dbReference>
<dbReference type="NCBIfam" id="NF003440">
    <property type="entry name" value="PRK04972.1"/>
    <property type="match status" value="1"/>
</dbReference>
<dbReference type="NCBIfam" id="TIGR01625">
    <property type="entry name" value="YidE_YbjL_dupl"/>
    <property type="match status" value="2"/>
</dbReference>
<dbReference type="PANTHER" id="PTHR30445">
    <property type="entry name" value="K(+)_H(+) ANTIPORTER SUBUNIT KHTT"/>
    <property type="match status" value="1"/>
</dbReference>
<dbReference type="PANTHER" id="PTHR30445:SF10">
    <property type="entry name" value="TRANSPORT PROTEIN YBJL-RELATED"/>
    <property type="match status" value="1"/>
</dbReference>
<dbReference type="Pfam" id="PF06826">
    <property type="entry name" value="Asp-Al_Ex"/>
    <property type="match status" value="2"/>
</dbReference>
<dbReference type="Pfam" id="PF02080">
    <property type="entry name" value="TrkA_C"/>
    <property type="match status" value="2"/>
</dbReference>
<dbReference type="SUPFAM" id="SSF116726">
    <property type="entry name" value="TrkA C-terminal domain-like"/>
    <property type="match status" value="2"/>
</dbReference>
<dbReference type="PROSITE" id="PS51202">
    <property type="entry name" value="RCK_C"/>
    <property type="match status" value="2"/>
</dbReference>
<reference key="1">
    <citation type="submission" date="2009-02" db="EMBL/GenBank/DDBJ databases">
        <title>Vibrio splendidus str. LGP32 complete genome.</title>
        <authorList>
            <person name="Mazel D."/>
            <person name="Le Roux F."/>
        </authorList>
    </citation>
    <scope>NUCLEOTIDE SEQUENCE [LARGE SCALE GENOMIC DNA]</scope>
    <source>
        <strain>LGP32</strain>
    </source>
</reference>
<proteinExistence type="inferred from homology"/>
<comment type="subcellular location">
    <subcellularLocation>
        <location evidence="1">Cell membrane</location>
        <topology evidence="1">Multi-pass membrane protein</topology>
    </subcellularLocation>
</comment>
<comment type="similarity">
    <text evidence="1">Belongs to the AAE transporter (TC 2.A.81) family. YbjL subfamily.</text>
</comment>
<sequence length="560" mass="60480">MNIDVVLLLKQNPILLIFVVLSIGLAIGKIRFGSLQLGNSIGVLITSLIMGHLGFSFNADALTIGFMLFIYCVGIEAGPNFFGIFFRDGKHYLILSLVVLSTAIALTYFCSEYLGLGFGLSAGMMAGALTATPILVGAQDALNSGLAEVPRNMDLGLVIENLSVGYAMAYLVGLISMIMFARLIPKLQKVNLHDSAEQIAQERGLGTSGQRKVYLPIIRAYRVGPELITWTDGKNLRELGIYRQTGCYIERIRRNGILAHPDGDAILQEGDEIALVGFPDSHARLDPSFRNGKEVFDRNLLDLRIVEEEIVVKSDNIAGKRLSDLNLSEYGCFLNRVVRAQIEMPMDLNIVLSKGDVLQVSGEKSRVHGLAEKIGFISIHSQMADLTAFCSFFILGILFGLITMTFGQVSFGLGNAVGLLLSGIMLGFLRANHPTFGYVPQGALNMVKDLGLMFFMVGIGLSAGGKIFEHLTQVGPQVIGIALIVSVLPVFFAYLVGAYALKMNRALLFGAIIGARTCAPAMDIVNDHARSTIPALGYAGTYAIANILMTLAGTFIIIIS</sequence>
<organism>
    <name type="scientific">Vibrio atlanticus (strain LGP32)</name>
    <name type="common">Vibrio splendidus (strain Mel32)</name>
    <dbReference type="NCBI Taxonomy" id="575788"/>
    <lineage>
        <taxon>Bacteria</taxon>
        <taxon>Pseudomonadati</taxon>
        <taxon>Pseudomonadota</taxon>
        <taxon>Gammaproteobacteria</taxon>
        <taxon>Vibrionales</taxon>
        <taxon>Vibrionaceae</taxon>
        <taxon>Vibrio</taxon>
    </lineage>
</organism>
<protein>
    <recommendedName>
        <fullName evidence="1">Putative transport protein VS_1837</fullName>
    </recommendedName>
</protein>
<feature type="chain" id="PRO_1000148998" description="Putative transport protein VS_1837">
    <location>
        <begin position="1"/>
        <end position="560"/>
    </location>
</feature>
<feature type="transmembrane region" description="Helical" evidence="1">
    <location>
        <begin position="5"/>
        <end position="25"/>
    </location>
</feature>
<feature type="transmembrane region" description="Helical" evidence="1">
    <location>
        <begin position="37"/>
        <end position="57"/>
    </location>
</feature>
<feature type="transmembrane region" description="Helical" evidence="1">
    <location>
        <begin position="66"/>
        <end position="86"/>
    </location>
</feature>
<feature type="transmembrane region" description="Helical" evidence="1">
    <location>
        <begin position="91"/>
        <end position="111"/>
    </location>
</feature>
<feature type="transmembrane region" description="Helical" evidence="1">
    <location>
        <begin position="155"/>
        <end position="175"/>
    </location>
</feature>
<feature type="transmembrane region" description="Helical" evidence="1">
    <location>
        <begin position="386"/>
        <end position="406"/>
    </location>
</feature>
<feature type="transmembrane region" description="Helical" evidence="1">
    <location>
        <begin position="409"/>
        <end position="429"/>
    </location>
</feature>
<feature type="transmembrane region" description="Helical" evidence="1">
    <location>
        <begin position="450"/>
        <end position="470"/>
    </location>
</feature>
<feature type="transmembrane region" description="Helical" evidence="1">
    <location>
        <begin position="478"/>
        <end position="498"/>
    </location>
</feature>
<feature type="transmembrane region" description="Helical" evidence="1">
    <location>
        <begin position="506"/>
        <end position="526"/>
    </location>
</feature>
<feature type="transmembrane region" description="Helical" evidence="1">
    <location>
        <begin position="539"/>
        <end position="559"/>
    </location>
</feature>
<feature type="domain" description="RCK C-terminal 1" evidence="1">
    <location>
        <begin position="203"/>
        <end position="292"/>
    </location>
</feature>
<feature type="domain" description="RCK C-terminal 2" evidence="1">
    <location>
        <begin position="293"/>
        <end position="376"/>
    </location>
</feature>
<gene>
    <name type="ordered locus">VS_1837</name>
</gene>
<name>Y1837_VIBA3</name>
<accession>B7VPS1</accession>
<keyword id="KW-1003">Cell membrane</keyword>
<keyword id="KW-0472">Membrane</keyword>
<keyword id="KW-0677">Repeat</keyword>
<keyword id="KW-0812">Transmembrane</keyword>
<keyword id="KW-1133">Transmembrane helix</keyword>
<keyword id="KW-0813">Transport</keyword>
<evidence type="ECO:0000255" key="1">
    <source>
        <dbReference type="HAMAP-Rule" id="MF_01015"/>
    </source>
</evidence>